<name>HIS4_HYPNA</name>
<accession>Q0C639</accession>
<reference key="1">
    <citation type="journal article" date="2006" name="J. Bacteriol.">
        <title>Comparative genomic evidence for a close relationship between the dimorphic prosthecate bacteria Hyphomonas neptunium and Caulobacter crescentus.</title>
        <authorList>
            <person name="Badger J.H."/>
            <person name="Hoover T.R."/>
            <person name="Brun Y.V."/>
            <person name="Weiner R.M."/>
            <person name="Laub M.T."/>
            <person name="Alexandre G."/>
            <person name="Mrazek J."/>
            <person name="Ren Q."/>
            <person name="Paulsen I.T."/>
            <person name="Nelson K.E."/>
            <person name="Khouri H.M."/>
            <person name="Radune D."/>
            <person name="Sosa J."/>
            <person name="Dodson R.J."/>
            <person name="Sullivan S.A."/>
            <person name="Rosovitz M.J."/>
            <person name="Madupu R."/>
            <person name="Brinkac L.M."/>
            <person name="Durkin A.S."/>
            <person name="Daugherty S.C."/>
            <person name="Kothari S.P."/>
            <person name="Giglio M.G."/>
            <person name="Zhou L."/>
            <person name="Haft D.H."/>
            <person name="Selengut J.D."/>
            <person name="Davidsen T.M."/>
            <person name="Yang Q."/>
            <person name="Zafar N."/>
            <person name="Ward N.L."/>
        </authorList>
    </citation>
    <scope>NUCLEOTIDE SEQUENCE [LARGE SCALE GENOMIC DNA]</scope>
    <source>
        <strain>ATCC 15444</strain>
    </source>
</reference>
<proteinExistence type="inferred from homology"/>
<feature type="chain" id="PRO_0000290481" description="1-(5-phosphoribosyl)-5-[(5-phosphoribosylamino)methylideneamino] imidazole-4-carboxamide isomerase">
    <location>
        <begin position="1"/>
        <end position="241"/>
    </location>
</feature>
<feature type="active site" description="Proton acceptor" evidence="1">
    <location>
        <position position="10"/>
    </location>
</feature>
<feature type="active site" description="Proton donor" evidence="1">
    <location>
        <position position="131"/>
    </location>
</feature>
<comment type="catalytic activity">
    <reaction evidence="1">
        <text>1-(5-phospho-beta-D-ribosyl)-5-[(5-phospho-beta-D-ribosylamino)methylideneamino]imidazole-4-carboxamide = 5-[(5-phospho-1-deoxy-D-ribulos-1-ylimino)methylamino]-1-(5-phospho-beta-D-ribosyl)imidazole-4-carboxamide</text>
        <dbReference type="Rhea" id="RHEA:15469"/>
        <dbReference type="ChEBI" id="CHEBI:58435"/>
        <dbReference type="ChEBI" id="CHEBI:58525"/>
        <dbReference type="EC" id="5.3.1.16"/>
    </reaction>
</comment>
<comment type="pathway">
    <text evidence="1">Amino-acid biosynthesis; L-histidine biosynthesis; L-histidine from 5-phospho-alpha-D-ribose 1-diphosphate: step 4/9.</text>
</comment>
<comment type="subcellular location">
    <subcellularLocation>
        <location evidence="1">Cytoplasm</location>
    </subcellularLocation>
</comment>
<comment type="similarity">
    <text evidence="1">Belongs to the HisA/HisF family.</text>
</comment>
<organism>
    <name type="scientific">Hyphomonas neptunium (strain ATCC 15444)</name>
    <dbReference type="NCBI Taxonomy" id="228405"/>
    <lineage>
        <taxon>Bacteria</taxon>
        <taxon>Pseudomonadati</taxon>
        <taxon>Pseudomonadota</taxon>
        <taxon>Alphaproteobacteria</taxon>
        <taxon>Hyphomonadales</taxon>
        <taxon>Hyphomonadaceae</taxon>
        <taxon>Hyphomonas</taxon>
    </lineage>
</organism>
<sequence>MTFTLYPAIDLKDGACVRLLRGEMDAATVFNTDPADQARAFHAMGFTHLHVVDLNGAFAGAPVNRAAVEGILKATPAPVQLGGGIRTRAQIDAWLEAGISRVILGTIALRDPELVKTAARALPGRIVVGIDAKDGMVAVEGWAETSDMKATELAKAFEGCGVAAIVATDIGRDGLKTGVNVPFTAELAHAVSIPVIASGGVRDVNDIRALKASGAPIAGSILGRALYDGDIVASEAIEAAG</sequence>
<dbReference type="EC" id="5.3.1.16" evidence="1"/>
<dbReference type="EMBL" id="CP000158">
    <property type="protein sequence ID" value="ABI75465.1"/>
    <property type="molecule type" value="Genomic_DNA"/>
</dbReference>
<dbReference type="RefSeq" id="WP_011645104.1">
    <property type="nucleotide sequence ID" value="NC_008358.1"/>
</dbReference>
<dbReference type="SMR" id="Q0C639"/>
<dbReference type="STRING" id="228405.HNE_0070"/>
<dbReference type="KEGG" id="hne:HNE_0070"/>
<dbReference type="eggNOG" id="COG0106">
    <property type="taxonomic scope" value="Bacteria"/>
</dbReference>
<dbReference type="HOGENOM" id="CLU_048577_1_1_5"/>
<dbReference type="UniPathway" id="UPA00031">
    <property type="reaction ID" value="UER00009"/>
</dbReference>
<dbReference type="Proteomes" id="UP000001959">
    <property type="component" value="Chromosome"/>
</dbReference>
<dbReference type="GO" id="GO:0005737">
    <property type="term" value="C:cytoplasm"/>
    <property type="evidence" value="ECO:0007669"/>
    <property type="project" value="UniProtKB-SubCell"/>
</dbReference>
<dbReference type="GO" id="GO:0003949">
    <property type="term" value="F:1-(5-phosphoribosyl)-5-[(5-phosphoribosylamino)methylideneamino]imidazole-4-carboxamide isomerase activity"/>
    <property type="evidence" value="ECO:0007669"/>
    <property type="project" value="UniProtKB-UniRule"/>
</dbReference>
<dbReference type="GO" id="GO:0000105">
    <property type="term" value="P:L-histidine biosynthetic process"/>
    <property type="evidence" value="ECO:0007669"/>
    <property type="project" value="UniProtKB-UniRule"/>
</dbReference>
<dbReference type="GO" id="GO:0000162">
    <property type="term" value="P:L-tryptophan biosynthetic process"/>
    <property type="evidence" value="ECO:0007669"/>
    <property type="project" value="TreeGrafter"/>
</dbReference>
<dbReference type="CDD" id="cd04732">
    <property type="entry name" value="HisA"/>
    <property type="match status" value="1"/>
</dbReference>
<dbReference type="FunFam" id="3.20.20.70:FF:000009">
    <property type="entry name" value="1-(5-phosphoribosyl)-5-[(5-phosphoribosylamino)methylideneamino] imidazole-4-carboxamide isomerase"/>
    <property type="match status" value="1"/>
</dbReference>
<dbReference type="Gene3D" id="3.20.20.70">
    <property type="entry name" value="Aldolase class I"/>
    <property type="match status" value="1"/>
</dbReference>
<dbReference type="HAMAP" id="MF_01014">
    <property type="entry name" value="HisA"/>
    <property type="match status" value="1"/>
</dbReference>
<dbReference type="InterPro" id="IPR013785">
    <property type="entry name" value="Aldolase_TIM"/>
</dbReference>
<dbReference type="InterPro" id="IPR006062">
    <property type="entry name" value="His_biosynth"/>
</dbReference>
<dbReference type="InterPro" id="IPR006063">
    <property type="entry name" value="HisA_bact_arch"/>
</dbReference>
<dbReference type="InterPro" id="IPR044524">
    <property type="entry name" value="Isoase_HisA-like"/>
</dbReference>
<dbReference type="InterPro" id="IPR023016">
    <property type="entry name" value="Isoase_HisA-like_bact"/>
</dbReference>
<dbReference type="InterPro" id="IPR011060">
    <property type="entry name" value="RibuloseP-bd_barrel"/>
</dbReference>
<dbReference type="NCBIfam" id="TIGR00007">
    <property type="entry name" value="1-(5-phosphoribosyl)-5-[(5-phosphoribosylamino)methylideneamino]imidazole-4-carboxamide isomerase"/>
    <property type="match status" value="1"/>
</dbReference>
<dbReference type="PANTHER" id="PTHR43090">
    <property type="entry name" value="1-(5-PHOSPHORIBOSYL)-5-[(5-PHOSPHORIBOSYLAMINO)METHYLIDENEAMINO] IMIDAZOLE-4-CARBOXAMIDE ISOMERASE"/>
    <property type="match status" value="1"/>
</dbReference>
<dbReference type="PANTHER" id="PTHR43090:SF2">
    <property type="entry name" value="1-(5-PHOSPHORIBOSYL)-5-[(5-PHOSPHORIBOSYLAMINO)METHYLIDENEAMINO] IMIDAZOLE-4-CARBOXAMIDE ISOMERASE"/>
    <property type="match status" value="1"/>
</dbReference>
<dbReference type="Pfam" id="PF00977">
    <property type="entry name" value="His_biosynth"/>
    <property type="match status" value="1"/>
</dbReference>
<dbReference type="SUPFAM" id="SSF51366">
    <property type="entry name" value="Ribulose-phoshate binding barrel"/>
    <property type="match status" value="1"/>
</dbReference>
<evidence type="ECO:0000255" key="1">
    <source>
        <dbReference type="HAMAP-Rule" id="MF_01014"/>
    </source>
</evidence>
<protein>
    <recommendedName>
        <fullName evidence="1">1-(5-phosphoribosyl)-5-[(5-phosphoribosylamino)methylideneamino] imidazole-4-carboxamide isomerase</fullName>
        <ecNumber evidence="1">5.3.1.16</ecNumber>
    </recommendedName>
    <alternativeName>
        <fullName evidence="1">Phosphoribosylformimino-5-aminoimidazole carboxamide ribotide isomerase</fullName>
    </alternativeName>
</protein>
<keyword id="KW-0028">Amino-acid biosynthesis</keyword>
<keyword id="KW-0963">Cytoplasm</keyword>
<keyword id="KW-0368">Histidine biosynthesis</keyword>
<keyword id="KW-0413">Isomerase</keyword>
<keyword id="KW-1185">Reference proteome</keyword>
<gene>
    <name evidence="1" type="primary">hisA</name>
    <name type="ordered locus">HNE_0070</name>
</gene>